<organism>
    <name type="scientific">Zea mays</name>
    <name type="common">Maize</name>
    <dbReference type="NCBI Taxonomy" id="4577"/>
    <lineage>
        <taxon>Eukaryota</taxon>
        <taxon>Viridiplantae</taxon>
        <taxon>Streptophyta</taxon>
        <taxon>Embryophyta</taxon>
        <taxon>Tracheophyta</taxon>
        <taxon>Spermatophyta</taxon>
        <taxon>Magnoliopsida</taxon>
        <taxon>Liliopsida</taxon>
        <taxon>Poales</taxon>
        <taxon>Poaceae</taxon>
        <taxon>PACMAD clade</taxon>
        <taxon>Panicoideae</taxon>
        <taxon>Andropogonodae</taxon>
        <taxon>Andropogoneae</taxon>
        <taxon>Tripsacinae</taxon>
        <taxon>Zea</taxon>
    </lineage>
</organism>
<sequence>MAAAARVSEVKAEGLLRGACTALAAAAALLVGLSTQTETVLLVRKKATVKDVQALWVLAMAAAAAAGYHLLQLLKCLYLGRVGGARPCRRSSRALAWTCLLLDKACAYTTFATTVAAAQACVVALDGAHALQWTKLCNIYTRFCEQVAGSLVLGMLAAVGTAVLSAASARNVFRHYASLETYAAH</sequence>
<reference key="1">
    <citation type="journal article" date="2009" name="Plant Mol. Biol.">
        <title>Insights into corn genes derived from large-scale cDNA sequencing.</title>
        <authorList>
            <person name="Alexandrov N.N."/>
            <person name="Brover V.V."/>
            <person name="Freidin S."/>
            <person name="Troukhan M.E."/>
            <person name="Tatarinova T.V."/>
            <person name="Zhang H."/>
            <person name="Swaller T.J."/>
            <person name="Lu Y.-P."/>
            <person name="Bouck J."/>
            <person name="Flavell R.B."/>
            <person name="Feldmann K.A."/>
        </authorList>
    </citation>
    <scope>NUCLEOTIDE SEQUENCE [LARGE SCALE MRNA]</scope>
</reference>
<reference key="2">
    <citation type="journal article" date="2014" name="Plant Physiol.">
        <title>Functional and evolutionary analysis of the CASPARIAN STRIP MEMBRANE DOMAIN PROTEIN family.</title>
        <authorList>
            <person name="Roppolo D."/>
            <person name="Boeckmann B."/>
            <person name="Pfister A."/>
            <person name="Boutet E."/>
            <person name="Rubio M.C."/>
            <person name="Denervaud-Tendon V."/>
            <person name="Vermeer J.E."/>
            <person name="Gheyselinck J."/>
            <person name="Xenarios I."/>
            <person name="Geldner N."/>
        </authorList>
    </citation>
    <scope>GENE FAMILY</scope>
    <scope>NOMENCLATURE</scope>
</reference>
<evidence type="ECO:0000250" key="1"/>
<evidence type="ECO:0000255" key="2"/>
<evidence type="ECO:0000305" key="3"/>
<proteinExistence type="evidence at transcript level"/>
<accession>B6TUB4</accession>
<comment type="subunit">
    <text evidence="1">Homodimer and heterodimers.</text>
</comment>
<comment type="subcellular location">
    <subcellularLocation>
        <location evidence="1">Cell membrane</location>
        <topology evidence="1">Multi-pass membrane protein</topology>
    </subcellularLocation>
</comment>
<comment type="similarity">
    <text evidence="3">Belongs to the Casparian strip membrane proteins (CASP) family.</text>
</comment>
<dbReference type="EMBL" id="EU968579">
    <property type="protein sequence ID" value="ACG40697.1"/>
    <property type="molecule type" value="mRNA"/>
</dbReference>
<dbReference type="RefSeq" id="NP_001150865.1">
    <property type="nucleotide sequence ID" value="NM_001157393.1"/>
</dbReference>
<dbReference type="SMR" id="B6TUB4"/>
<dbReference type="FunCoup" id="B6TUB4">
    <property type="interactions" value="73"/>
</dbReference>
<dbReference type="InParanoid" id="B6TUB4"/>
<dbReference type="Proteomes" id="UP000007305">
    <property type="component" value="Unplaced"/>
</dbReference>
<dbReference type="ExpressionAtlas" id="B6TUB4">
    <property type="expression patterns" value="baseline and differential"/>
</dbReference>
<dbReference type="GO" id="GO:0005886">
    <property type="term" value="C:plasma membrane"/>
    <property type="evidence" value="ECO:0007669"/>
    <property type="project" value="UniProtKB-SubCell"/>
</dbReference>
<dbReference type="InterPro" id="IPR006459">
    <property type="entry name" value="CASP/CASPL"/>
</dbReference>
<dbReference type="InterPro" id="IPR006702">
    <property type="entry name" value="CASP_dom"/>
</dbReference>
<dbReference type="NCBIfam" id="TIGR01569">
    <property type="entry name" value="A_tha_TIGR01569"/>
    <property type="match status" value="1"/>
</dbReference>
<dbReference type="PANTHER" id="PTHR33573:SF30">
    <property type="entry name" value="CASP-LIKE PROTEIN 2C1-RELATED"/>
    <property type="match status" value="1"/>
</dbReference>
<dbReference type="PANTHER" id="PTHR33573">
    <property type="entry name" value="CASP-LIKE PROTEIN 4A4"/>
    <property type="match status" value="1"/>
</dbReference>
<dbReference type="Pfam" id="PF04535">
    <property type="entry name" value="CASP_dom"/>
    <property type="match status" value="1"/>
</dbReference>
<protein>
    <recommendedName>
        <fullName>CASP-like protein 2C2</fullName>
        <shortName>ZmCASPL2C2</shortName>
    </recommendedName>
</protein>
<feature type="chain" id="PRO_0000391556" description="CASP-like protein 2C2">
    <location>
        <begin position="1"/>
        <end position="185"/>
    </location>
</feature>
<feature type="topological domain" description="Cytoplasmic" evidence="2">
    <location>
        <begin position="1"/>
        <end position="22"/>
    </location>
</feature>
<feature type="transmembrane region" description="Helical" evidence="2">
    <location>
        <begin position="23"/>
        <end position="43"/>
    </location>
</feature>
<feature type="topological domain" description="Extracellular" evidence="2">
    <location>
        <begin position="44"/>
        <end position="53"/>
    </location>
</feature>
<feature type="transmembrane region" description="Helical" evidence="2">
    <location>
        <begin position="54"/>
        <end position="74"/>
    </location>
</feature>
<feature type="topological domain" description="Cytoplasmic" evidence="2">
    <location>
        <begin position="75"/>
        <end position="104"/>
    </location>
</feature>
<feature type="transmembrane region" description="Helical" evidence="2">
    <location>
        <begin position="105"/>
        <end position="125"/>
    </location>
</feature>
<feature type="topological domain" description="Extracellular" evidence="2">
    <location>
        <begin position="126"/>
        <end position="146"/>
    </location>
</feature>
<feature type="transmembrane region" description="Helical" evidence="2">
    <location>
        <begin position="147"/>
        <end position="167"/>
    </location>
</feature>
<feature type="topological domain" description="Cytoplasmic" evidence="2">
    <location>
        <begin position="168"/>
        <end position="185"/>
    </location>
</feature>
<name>CSPLB_MAIZE</name>
<keyword id="KW-1003">Cell membrane</keyword>
<keyword id="KW-0472">Membrane</keyword>
<keyword id="KW-1185">Reference proteome</keyword>
<keyword id="KW-0812">Transmembrane</keyword>
<keyword id="KW-1133">Transmembrane helix</keyword>